<evidence type="ECO:0000255" key="1">
    <source>
        <dbReference type="HAMAP-Rule" id="MF_01694"/>
    </source>
</evidence>
<evidence type="ECO:0000255" key="2">
    <source>
        <dbReference type="PROSITE-ProRule" id="PRU01266"/>
    </source>
</evidence>
<organism>
    <name type="scientific">Geotalea uraniireducens (strain Rf4)</name>
    <name type="common">Geobacter uraniireducens</name>
    <dbReference type="NCBI Taxonomy" id="351605"/>
    <lineage>
        <taxon>Bacteria</taxon>
        <taxon>Pseudomonadati</taxon>
        <taxon>Thermodesulfobacteriota</taxon>
        <taxon>Desulfuromonadia</taxon>
        <taxon>Geobacterales</taxon>
        <taxon>Geobacteraceae</taxon>
        <taxon>Geotalea</taxon>
    </lineage>
</organism>
<accession>A5G3Q7</accession>
<feature type="chain" id="PRO_0000381407" description="Biotin synthase">
    <location>
        <begin position="1"/>
        <end position="329"/>
    </location>
</feature>
<feature type="domain" description="Radical SAM core" evidence="2">
    <location>
        <begin position="48"/>
        <end position="278"/>
    </location>
</feature>
<feature type="binding site" evidence="1">
    <location>
        <position position="66"/>
    </location>
    <ligand>
        <name>[4Fe-4S] cluster</name>
        <dbReference type="ChEBI" id="CHEBI:49883"/>
        <note>4Fe-4S-S-AdoMet</note>
    </ligand>
</feature>
<feature type="binding site" evidence="1">
    <location>
        <position position="70"/>
    </location>
    <ligand>
        <name>[4Fe-4S] cluster</name>
        <dbReference type="ChEBI" id="CHEBI:49883"/>
        <note>4Fe-4S-S-AdoMet</note>
    </ligand>
</feature>
<feature type="binding site" evidence="1">
    <location>
        <position position="73"/>
    </location>
    <ligand>
        <name>[4Fe-4S] cluster</name>
        <dbReference type="ChEBI" id="CHEBI:49883"/>
        <note>4Fe-4S-S-AdoMet</note>
    </ligand>
</feature>
<feature type="binding site" evidence="1">
    <location>
        <position position="143"/>
    </location>
    <ligand>
        <name>[2Fe-2S] cluster</name>
        <dbReference type="ChEBI" id="CHEBI:190135"/>
    </ligand>
</feature>
<feature type="binding site" evidence="1">
    <location>
        <position position="203"/>
    </location>
    <ligand>
        <name>[2Fe-2S] cluster</name>
        <dbReference type="ChEBI" id="CHEBI:190135"/>
    </ligand>
</feature>
<comment type="function">
    <text evidence="1">Catalyzes the conversion of dethiobiotin (DTB) to biotin by the insertion of a sulfur atom into dethiobiotin via a radical-based mechanism.</text>
</comment>
<comment type="catalytic activity">
    <reaction evidence="1">
        <text>(4R,5S)-dethiobiotin + (sulfur carrier)-SH + 2 reduced [2Fe-2S]-[ferredoxin] + 2 S-adenosyl-L-methionine = (sulfur carrier)-H + biotin + 2 5'-deoxyadenosine + 2 L-methionine + 2 oxidized [2Fe-2S]-[ferredoxin]</text>
        <dbReference type="Rhea" id="RHEA:22060"/>
        <dbReference type="Rhea" id="RHEA-COMP:10000"/>
        <dbReference type="Rhea" id="RHEA-COMP:10001"/>
        <dbReference type="Rhea" id="RHEA-COMP:14737"/>
        <dbReference type="Rhea" id="RHEA-COMP:14739"/>
        <dbReference type="ChEBI" id="CHEBI:17319"/>
        <dbReference type="ChEBI" id="CHEBI:29917"/>
        <dbReference type="ChEBI" id="CHEBI:33737"/>
        <dbReference type="ChEBI" id="CHEBI:33738"/>
        <dbReference type="ChEBI" id="CHEBI:57586"/>
        <dbReference type="ChEBI" id="CHEBI:57844"/>
        <dbReference type="ChEBI" id="CHEBI:59789"/>
        <dbReference type="ChEBI" id="CHEBI:64428"/>
        <dbReference type="ChEBI" id="CHEBI:149473"/>
        <dbReference type="EC" id="2.8.1.6"/>
    </reaction>
</comment>
<comment type="cofactor">
    <cofactor evidence="1">
        <name>[4Fe-4S] cluster</name>
        <dbReference type="ChEBI" id="CHEBI:49883"/>
    </cofactor>
    <text evidence="1">Binds 1 [4Fe-4S] cluster. The cluster is coordinated with 3 cysteines and an exchangeable S-adenosyl-L-methionine.</text>
</comment>
<comment type="cofactor">
    <cofactor evidence="1">
        <name>[2Fe-2S] cluster</name>
        <dbReference type="ChEBI" id="CHEBI:190135"/>
    </cofactor>
    <text evidence="1">Binds 1 [2Fe-2S] cluster. The cluster is coordinated with 3 cysteines and 1 arginine.</text>
</comment>
<comment type="pathway">
    <text evidence="1">Cofactor biosynthesis; biotin biosynthesis; biotin from 7,8-diaminononanoate: step 2/2.</text>
</comment>
<comment type="subunit">
    <text evidence="1">Homodimer.</text>
</comment>
<comment type="similarity">
    <text evidence="1">Belongs to the radical SAM superfamily. Biotin synthase family.</text>
</comment>
<name>BIOB_GEOUR</name>
<gene>
    <name evidence="1" type="primary">bioB</name>
    <name type="ordered locus">Gura_2242</name>
</gene>
<protein>
    <recommendedName>
        <fullName evidence="1">Biotin synthase</fullName>
        <ecNumber evidence="1">2.8.1.6</ecNumber>
    </recommendedName>
</protein>
<reference key="1">
    <citation type="submission" date="2007-05" db="EMBL/GenBank/DDBJ databases">
        <title>Complete sequence of Geobacter uraniireducens Rf4.</title>
        <authorList>
            <consortium name="US DOE Joint Genome Institute"/>
            <person name="Copeland A."/>
            <person name="Lucas S."/>
            <person name="Lapidus A."/>
            <person name="Barry K."/>
            <person name="Detter J.C."/>
            <person name="Glavina del Rio T."/>
            <person name="Hammon N."/>
            <person name="Israni S."/>
            <person name="Dalin E."/>
            <person name="Tice H."/>
            <person name="Pitluck S."/>
            <person name="Chertkov O."/>
            <person name="Brettin T."/>
            <person name="Bruce D."/>
            <person name="Han C."/>
            <person name="Schmutz J."/>
            <person name="Larimer F."/>
            <person name="Land M."/>
            <person name="Hauser L."/>
            <person name="Kyrpides N."/>
            <person name="Mikhailova N."/>
            <person name="Shelobolina E."/>
            <person name="Aklujkar M."/>
            <person name="Lovley D."/>
            <person name="Richardson P."/>
        </authorList>
    </citation>
    <scope>NUCLEOTIDE SEQUENCE [LARGE SCALE GENOMIC DNA]</scope>
    <source>
        <strain>ATCC BAA-1134 / JCM 13001 / Rf4</strain>
    </source>
</reference>
<keyword id="KW-0001">2Fe-2S</keyword>
<keyword id="KW-0004">4Fe-4S</keyword>
<keyword id="KW-0093">Biotin biosynthesis</keyword>
<keyword id="KW-0408">Iron</keyword>
<keyword id="KW-0411">Iron-sulfur</keyword>
<keyword id="KW-0479">Metal-binding</keyword>
<keyword id="KW-1185">Reference proteome</keyword>
<keyword id="KW-0949">S-adenosyl-L-methionine</keyword>
<keyword id="KW-0808">Transferase</keyword>
<proteinExistence type="inferred from homology"/>
<dbReference type="EC" id="2.8.1.6" evidence="1"/>
<dbReference type="EMBL" id="CP000698">
    <property type="protein sequence ID" value="ABQ26425.1"/>
    <property type="molecule type" value="Genomic_DNA"/>
</dbReference>
<dbReference type="RefSeq" id="WP_011939121.1">
    <property type="nucleotide sequence ID" value="NC_009483.1"/>
</dbReference>
<dbReference type="SMR" id="A5G3Q7"/>
<dbReference type="STRING" id="351605.Gura_2242"/>
<dbReference type="KEGG" id="gur:Gura_2242"/>
<dbReference type="HOGENOM" id="CLU_033172_2_1_7"/>
<dbReference type="OrthoDB" id="9786826at2"/>
<dbReference type="UniPathway" id="UPA00078">
    <property type="reaction ID" value="UER00162"/>
</dbReference>
<dbReference type="Proteomes" id="UP000006695">
    <property type="component" value="Chromosome"/>
</dbReference>
<dbReference type="GO" id="GO:0051537">
    <property type="term" value="F:2 iron, 2 sulfur cluster binding"/>
    <property type="evidence" value="ECO:0007669"/>
    <property type="project" value="UniProtKB-KW"/>
</dbReference>
<dbReference type="GO" id="GO:0051539">
    <property type="term" value="F:4 iron, 4 sulfur cluster binding"/>
    <property type="evidence" value="ECO:0007669"/>
    <property type="project" value="UniProtKB-KW"/>
</dbReference>
<dbReference type="GO" id="GO:0004076">
    <property type="term" value="F:biotin synthase activity"/>
    <property type="evidence" value="ECO:0007669"/>
    <property type="project" value="UniProtKB-UniRule"/>
</dbReference>
<dbReference type="GO" id="GO:0005506">
    <property type="term" value="F:iron ion binding"/>
    <property type="evidence" value="ECO:0007669"/>
    <property type="project" value="UniProtKB-UniRule"/>
</dbReference>
<dbReference type="GO" id="GO:0009102">
    <property type="term" value="P:biotin biosynthetic process"/>
    <property type="evidence" value="ECO:0007669"/>
    <property type="project" value="UniProtKB-UniRule"/>
</dbReference>
<dbReference type="CDD" id="cd01335">
    <property type="entry name" value="Radical_SAM"/>
    <property type="match status" value="1"/>
</dbReference>
<dbReference type="FunFam" id="3.20.20.70:FF:000026">
    <property type="entry name" value="Biotin synthase"/>
    <property type="match status" value="1"/>
</dbReference>
<dbReference type="Gene3D" id="3.20.20.70">
    <property type="entry name" value="Aldolase class I"/>
    <property type="match status" value="1"/>
</dbReference>
<dbReference type="HAMAP" id="MF_01694">
    <property type="entry name" value="BioB"/>
    <property type="match status" value="1"/>
</dbReference>
<dbReference type="InterPro" id="IPR013785">
    <property type="entry name" value="Aldolase_TIM"/>
</dbReference>
<dbReference type="InterPro" id="IPR010722">
    <property type="entry name" value="BATS_dom"/>
</dbReference>
<dbReference type="InterPro" id="IPR002684">
    <property type="entry name" value="Biotin_synth/BioAB"/>
</dbReference>
<dbReference type="InterPro" id="IPR024177">
    <property type="entry name" value="Biotin_synthase"/>
</dbReference>
<dbReference type="InterPro" id="IPR006638">
    <property type="entry name" value="Elp3/MiaA/NifB-like_rSAM"/>
</dbReference>
<dbReference type="InterPro" id="IPR007197">
    <property type="entry name" value="rSAM"/>
</dbReference>
<dbReference type="NCBIfam" id="TIGR00433">
    <property type="entry name" value="bioB"/>
    <property type="match status" value="1"/>
</dbReference>
<dbReference type="PANTHER" id="PTHR22976">
    <property type="entry name" value="BIOTIN SYNTHASE"/>
    <property type="match status" value="1"/>
</dbReference>
<dbReference type="PANTHER" id="PTHR22976:SF2">
    <property type="entry name" value="BIOTIN SYNTHASE, MITOCHONDRIAL"/>
    <property type="match status" value="1"/>
</dbReference>
<dbReference type="Pfam" id="PF06968">
    <property type="entry name" value="BATS"/>
    <property type="match status" value="1"/>
</dbReference>
<dbReference type="Pfam" id="PF04055">
    <property type="entry name" value="Radical_SAM"/>
    <property type="match status" value="1"/>
</dbReference>
<dbReference type="PIRSF" id="PIRSF001619">
    <property type="entry name" value="Biotin_synth"/>
    <property type="match status" value="1"/>
</dbReference>
<dbReference type="SFLD" id="SFLDG01278">
    <property type="entry name" value="biotin_synthase_like"/>
    <property type="match status" value="1"/>
</dbReference>
<dbReference type="SFLD" id="SFLDS00029">
    <property type="entry name" value="Radical_SAM"/>
    <property type="match status" value="1"/>
</dbReference>
<dbReference type="SMART" id="SM00876">
    <property type="entry name" value="BATS"/>
    <property type="match status" value="1"/>
</dbReference>
<dbReference type="SMART" id="SM00729">
    <property type="entry name" value="Elp3"/>
    <property type="match status" value="1"/>
</dbReference>
<dbReference type="SUPFAM" id="SSF102114">
    <property type="entry name" value="Radical SAM enzymes"/>
    <property type="match status" value="1"/>
</dbReference>
<dbReference type="PROSITE" id="PS51918">
    <property type="entry name" value="RADICAL_SAM"/>
    <property type="match status" value="1"/>
</dbReference>
<sequence length="329" mass="36042">MENTIEALTGRIINGEAITHAEALELSQMEGSALFPLFCVANRIKEHFVGDKVYLCSIINAKSGRCPENCSFCAQSAHHKTDAPVYSLVDEDKMVACAHEAEKNGSSCYGIITSGTSINKGEELTRICRAVKRIRQETGITPSCSLGIIDYETALALKDAGVETYHHNLETARSFFPNVCTTHDYEEDVETVRVARKAGMKVCCGGIFGLGESIPQRVEMALTLRELDVDSVPLNFLNPIPGTRLENAVNITPMECLQTIALFRMILPSKKISVCGGREKNLRDLQSWIFFAGASGTMIGNYLTTTGRAAEEDWQMLKDLNLSAANCCD</sequence>